<protein>
    <recommendedName>
        <fullName evidence="1">Small ribosomal subunit protein uS4</fullName>
    </recommendedName>
    <alternativeName>
        <fullName evidence="2">30S ribosomal protein S4</fullName>
    </alternativeName>
</protein>
<reference key="1">
    <citation type="journal article" date="2006" name="J. Bacteriol.">
        <title>Genome sequence of Aeromonas hydrophila ATCC 7966T: jack of all trades.</title>
        <authorList>
            <person name="Seshadri R."/>
            <person name="Joseph S.W."/>
            <person name="Chopra A.K."/>
            <person name="Sha J."/>
            <person name="Shaw J."/>
            <person name="Graf J."/>
            <person name="Haft D.H."/>
            <person name="Wu M."/>
            <person name="Ren Q."/>
            <person name="Rosovitz M.J."/>
            <person name="Madupu R."/>
            <person name="Tallon L."/>
            <person name="Kim M."/>
            <person name="Jin S."/>
            <person name="Vuong H."/>
            <person name="Stine O.C."/>
            <person name="Ali A."/>
            <person name="Horneman A.J."/>
            <person name="Heidelberg J.F."/>
        </authorList>
    </citation>
    <scope>NUCLEOTIDE SEQUENCE [LARGE SCALE GENOMIC DNA]</scope>
    <source>
        <strain>ATCC 7966 / DSM 30187 / BCRC 13018 / CCUG 14551 / JCM 1027 / KCTC 2358 / NCIMB 9240 / NCTC 8049</strain>
    </source>
</reference>
<dbReference type="EMBL" id="CP000462">
    <property type="protein sequence ID" value="ABK36993.1"/>
    <property type="molecule type" value="Genomic_DNA"/>
</dbReference>
<dbReference type="RefSeq" id="WP_011704319.1">
    <property type="nucleotide sequence ID" value="NC_008570.1"/>
</dbReference>
<dbReference type="RefSeq" id="YP_854866.1">
    <property type="nucleotide sequence ID" value="NC_008570.1"/>
</dbReference>
<dbReference type="SMR" id="A0KF44"/>
<dbReference type="STRING" id="380703.AHA_0332"/>
<dbReference type="EnsemblBacteria" id="ABK36993">
    <property type="protein sequence ID" value="ABK36993"/>
    <property type="gene ID" value="AHA_0332"/>
</dbReference>
<dbReference type="GeneID" id="4489537"/>
<dbReference type="KEGG" id="aha:AHA_0332"/>
<dbReference type="PATRIC" id="fig|380703.7.peg.322"/>
<dbReference type="eggNOG" id="COG0522">
    <property type="taxonomic scope" value="Bacteria"/>
</dbReference>
<dbReference type="HOGENOM" id="CLU_092403_0_2_6"/>
<dbReference type="OrthoDB" id="9803672at2"/>
<dbReference type="Proteomes" id="UP000000756">
    <property type="component" value="Chromosome"/>
</dbReference>
<dbReference type="GO" id="GO:0015935">
    <property type="term" value="C:small ribosomal subunit"/>
    <property type="evidence" value="ECO:0007669"/>
    <property type="project" value="InterPro"/>
</dbReference>
<dbReference type="GO" id="GO:0019843">
    <property type="term" value="F:rRNA binding"/>
    <property type="evidence" value="ECO:0007669"/>
    <property type="project" value="UniProtKB-UniRule"/>
</dbReference>
<dbReference type="GO" id="GO:0003735">
    <property type="term" value="F:structural constituent of ribosome"/>
    <property type="evidence" value="ECO:0007669"/>
    <property type="project" value="InterPro"/>
</dbReference>
<dbReference type="GO" id="GO:0042274">
    <property type="term" value="P:ribosomal small subunit biogenesis"/>
    <property type="evidence" value="ECO:0007669"/>
    <property type="project" value="TreeGrafter"/>
</dbReference>
<dbReference type="GO" id="GO:0006412">
    <property type="term" value="P:translation"/>
    <property type="evidence" value="ECO:0007669"/>
    <property type="project" value="UniProtKB-UniRule"/>
</dbReference>
<dbReference type="CDD" id="cd00165">
    <property type="entry name" value="S4"/>
    <property type="match status" value="1"/>
</dbReference>
<dbReference type="FunFam" id="1.10.1050.10:FF:000001">
    <property type="entry name" value="30S ribosomal protein S4"/>
    <property type="match status" value="1"/>
</dbReference>
<dbReference type="FunFam" id="3.10.290.10:FF:000001">
    <property type="entry name" value="30S ribosomal protein S4"/>
    <property type="match status" value="1"/>
</dbReference>
<dbReference type="Gene3D" id="1.10.1050.10">
    <property type="entry name" value="Ribosomal Protein S4 Delta 41, Chain A, domain 1"/>
    <property type="match status" value="1"/>
</dbReference>
<dbReference type="Gene3D" id="3.10.290.10">
    <property type="entry name" value="RNA-binding S4 domain"/>
    <property type="match status" value="1"/>
</dbReference>
<dbReference type="HAMAP" id="MF_01306_B">
    <property type="entry name" value="Ribosomal_uS4_B"/>
    <property type="match status" value="1"/>
</dbReference>
<dbReference type="InterPro" id="IPR022801">
    <property type="entry name" value="Ribosomal_uS4"/>
</dbReference>
<dbReference type="InterPro" id="IPR005709">
    <property type="entry name" value="Ribosomal_uS4_bac-type"/>
</dbReference>
<dbReference type="InterPro" id="IPR018079">
    <property type="entry name" value="Ribosomal_uS4_CS"/>
</dbReference>
<dbReference type="InterPro" id="IPR001912">
    <property type="entry name" value="Ribosomal_uS4_N"/>
</dbReference>
<dbReference type="InterPro" id="IPR002942">
    <property type="entry name" value="S4_RNA-bd"/>
</dbReference>
<dbReference type="InterPro" id="IPR036986">
    <property type="entry name" value="S4_RNA-bd_sf"/>
</dbReference>
<dbReference type="NCBIfam" id="NF003717">
    <property type="entry name" value="PRK05327.1"/>
    <property type="match status" value="1"/>
</dbReference>
<dbReference type="NCBIfam" id="TIGR01017">
    <property type="entry name" value="rpsD_bact"/>
    <property type="match status" value="1"/>
</dbReference>
<dbReference type="PANTHER" id="PTHR11831">
    <property type="entry name" value="30S 40S RIBOSOMAL PROTEIN"/>
    <property type="match status" value="1"/>
</dbReference>
<dbReference type="PANTHER" id="PTHR11831:SF4">
    <property type="entry name" value="SMALL RIBOSOMAL SUBUNIT PROTEIN US4M"/>
    <property type="match status" value="1"/>
</dbReference>
<dbReference type="Pfam" id="PF00163">
    <property type="entry name" value="Ribosomal_S4"/>
    <property type="match status" value="1"/>
</dbReference>
<dbReference type="Pfam" id="PF01479">
    <property type="entry name" value="S4"/>
    <property type="match status" value="1"/>
</dbReference>
<dbReference type="SMART" id="SM01390">
    <property type="entry name" value="Ribosomal_S4"/>
    <property type="match status" value="1"/>
</dbReference>
<dbReference type="SMART" id="SM00363">
    <property type="entry name" value="S4"/>
    <property type="match status" value="1"/>
</dbReference>
<dbReference type="SUPFAM" id="SSF55174">
    <property type="entry name" value="Alpha-L RNA-binding motif"/>
    <property type="match status" value="1"/>
</dbReference>
<dbReference type="PROSITE" id="PS00632">
    <property type="entry name" value="RIBOSOMAL_S4"/>
    <property type="match status" value="1"/>
</dbReference>
<dbReference type="PROSITE" id="PS50889">
    <property type="entry name" value="S4"/>
    <property type="match status" value="1"/>
</dbReference>
<comment type="function">
    <text evidence="1">One of the primary rRNA binding proteins, it binds directly to 16S rRNA where it nucleates assembly of the body of the 30S subunit.</text>
</comment>
<comment type="function">
    <text evidence="1">With S5 and S12 plays an important role in translational accuracy.</text>
</comment>
<comment type="subunit">
    <text evidence="1">Part of the 30S ribosomal subunit. Contacts protein S5. The interaction surface between S4 and S5 is involved in control of translational fidelity.</text>
</comment>
<comment type="similarity">
    <text evidence="1">Belongs to the universal ribosomal protein uS4 family.</text>
</comment>
<feature type="chain" id="PRO_0000293230" description="Small ribosomal subunit protein uS4">
    <location>
        <begin position="1"/>
        <end position="206"/>
    </location>
</feature>
<feature type="domain" description="S4 RNA-binding" evidence="1">
    <location>
        <begin position="96"/>
        <end position="156"/>
    </location>
</feature>
<name>RS4_AERHH</name>
<sequence>MARYIGPKLKLSRREGTDLFLKSGVRAIDSKCKIDTVPGQHGARKARLSDYGVQLREKQKVRRIYGVLEKQFRNYYRDAARQKGNTGENLLQLLEGRLDNVVYRMGFGATRAESRQLVSHKAIMVNGRVVNIPSFQVSPEDVICVREKAKKQARIKASLEVAGQREKPTWVEVDAAKMEGAFKRLPERSDLSADINEQLIVELYSK</sequence>
<evidence type="ECO:0000255" key="1">
    <source>
        <dbReference type="HAMAP-Rule" id="MF_01306"/>
    </source>
</evidence>
<evidence type="ECO:0000305" key="2"/>
<proteinExistence type="inferred from homology"/>
<gene>
    <name evidence="1" type="primary">rpsD</name>
    <name type="ordered locus">AHA_0332</name>
</gene>
<accession>A0KF44</accession>
<organism>
    <name type="scientific">Aeromonas hydrophila subsp. hydrophila (strain ATCC 7966 / DSM 30187 / BCRC 13018 / CCUG 14551 / JCM 1027 / KCTC 2358 / NCIMB 9240 / NCTC 8049)</name>
    <dbReference type="NCBI Taxonomy" id="380703"/>
    <lineage>
        <taxon>Bacteria</taxon>
        <taxon>Pseudomonadati</taxon>
        <taxon>Pseudomonadota</taxon>
        <taxon>Gammaproteobacteria</taxon>
        <taxon>Aeromonadales</taxon>
        <taxon>Aeromonadaceae</taxon>
        <taxon>Aeromonas</taxon>
    </lineage>
</organism>
<keyword id="KW-1185">Reference proteome</keyword>
<keyword id="KW-0687">Ribonucleoprotein</keyword>
<keyword id="KW-0689">Ribosomal protein</keyword>
<keyword id="KW-0694">RNA-binding</keyword>
<keyword id="KW-0699">rRNA-binding</keyword>